<proteinExistence type="evidence at protein level"/>
<evidence type="ECO:0000250" key="1"/>
<evidence type="ECO:0000255" key="2"/>
<evidence type="ECO:0000256" key="3">
    <source>
        <dbReference type="SAM" id="MobiDB-lite"/>
    </source>
</evidence>
<evidence type="ECO:0000305" key="4"/>
<accession>P70039</accession>
<accession>P79934</accession>
<reference key="1">
    <citation type="submission" date="1996-07" db="EMBL/GenBank/DDBJ databases">
        <authorList>
            <person name="Vleminckx K."/>
            <person name="Wong E."/>
            <person name="Guger K."/>
            <person name="Gumbiner B.M."/>
        </authorList>
    </citation>
    <scope>NUCLEOTIDE SEQUENCE [MRNA]</scope>
</reference>
<organism>
    <name type="scientific">Xenopus laevis</name>
    <name type="common">African clawed frog</name>
    <dbReference type="NCBI Taxonomy" id="8355"/>
    <lineage>
        <taxon>Eukaryota</taxon>
        <taxon>Metazoa</taxon>
        <taxon>Chordata</taxon>
        <taxon>Craniata</taxon>
        <taxon>Vertebrata</taxon>
        <taxon>Euteleostomi</taxon>
        <taxon>Amphibia</taxon>
        <taxon>Batrachia</taxon>
        <taxon>Anura</taxon>
        <taxon>Pipoidea</taxon>
        <taxon>Pipidae</taxon>
        <taxon>Xenopodinae</taxon>
        <taxon>Xenopus</taxon>
        <taxon>Xenopus</taxon>
    </lineage>
</organism>
<gene>
    <name type="primary">apc</name>
</gene>
<comment type="function">
    <text evidence="1">Promotes rapid degradation of CTNNB1 and participates in Wnt signaling as a negative regulator.</text>
</comment>
<comment type="interaction">
    <interactant intactId="EBI-8069633">
        <id>P70039</id>
    </interactant>
    <interactant intactId="EBI-1037449">
        <id>Q9YGY0</id>
        <label>axin1</label>
    </interactant>
    <organismsDiffer>false</organismsDiffer>
    <experiments>2</experiments>
</comment>
<comment type="interaction">
    <interactant intactId="EBI-8069633">
        <id>P70039</id>
    </interactant>
    <interactant intactId="EBI-346622">
        <id>Q9ULH1</id>
        <label>ASAP1</label>
    </interactant>
    <organismsDiffer>true</organismsDiffer>
    <experiments>5</experiments>
</comment>
<comment type="interaction">
    <interactant intactId="EBI-8069633">
        <id>P70039</id>
    </interactant>
    <interactant intactId="EBI-310968">
        <id>O43150</id>
        <label>ASAP2</label>
    </interactant>
    <organismsDiffer>true</organismsDiffer>
    <experiments>4</experiments>
</comment>
<comment type="interaction">
    <interactant intactId="EBI-8069633">
        <id>P70039</id>
    </interactant>
    <interactant intactId="EBI-710484">
        <id>O15169</id>
        <label>AXIN1</label>
    </interactant>
    <organismsDiffer>true</organismsDiffer>
    <experiments>2</experiments>
</comment>
<comment type="similarity">
    <text evidence="4">Belongs to the adenomatous polyposis coli (APC) family.</text>
</comment>
<protein>
    <recommendedName>
        <fullName>Adenomatous polyposis coli homolog</fullName>
        <shortName>Protein APC</shortName>
    </recommendedName>
</protein>
<name>APC_XENLA</name>
<sequence>MAAASYDQLVKQVEALTMENTNLRQELEDNSNHLTKLETEATNMKEVLKQLQGSIEDEAMASSGPIDLLERFKDLNLDSSNIPAGKARPKMSMRSYGSREGSLSGHSGECSPVPVGSFQRRGLLNGSRESAGYMEELEKERLLLIAEHEKEEKEKRWYYAQLQNLTKRIDSLPLTENFSMQTDMTRRQLEYEARQIRAAMEEQLGTCQDMEKRVQTRVGKIHQIEEEILRIRQLLQSQVAEAAERTPQSKHDAGSRDAEKLPDGQGTSEITASGNVGSGQGSSSRADHDTTSVMSSNSTYSVPRRLTSHLGTKVEMVYSLLSMLGTHDKDDMSRTLLAMSSSQDSCIAMRQSGCLPLLIQLLHGNDKDSVLLGNSRGSKEARASGSAALDNIIHSQPDDKRGRREIRVLHLLEQIRAYCETCWEWQEAHEQGMDQDKNPMPAPVDHQICPAVCVLMKLSFDEEHRHAMNELGGLQAIAELLQVDCEMYGLINDHYSVTLRRYAGMALTNLTFGDVANKATLCSMKSCMRALVAQLKSESEDLQQVIASVLRNLSWRADVNSKKTLREVGSVKALMECALDVKKESTLKSVLSALWNLSAHCTENKADICSVDGALAFLVSTLTYRSQTNTLAIIESGGGILRNVSSLIATNEDHRQILRENNCLQTLLQHLKSHSLTIVSNACGTLWNLSARNAKDQEGLWDMGAVSMLKNLIHSKHKMIAMGSAAALRNLMANRPAKYKDANIMSPGSSVPSLHVRKQKALEAELDAQHLSETFDNIDNLSPKTTHRNKQRHKQNLCSEYALDSSRHDDSICRSDNFSIGNLTVLSPYINTTVLPGSSSPRPTMDGSRPEKDRERTAGLGNYHSTTESSGNSSKRIGIQLSTTAQISKVMDEVSNIHLVQENRSSGSASEMHCMSDERNSQRKPSSNHPQSNPFTFTKAESSTRGCPVAFMKMEYKMASNDSLNSVSSTEGYGKRGQVKPSVESYSEDDESKFFSYGQYPAGLAHKIQSANHMDDNDTELDTPINYSLKYSDEQLNSGRQSPTQNERWSRPKHIIDSEMKQSEQRQPRTTKTTYSSYTENKEEKHKKFPPHFNQSENVPAYTRSRGANNQVDQSRVSSNLSNNSKASKPHCQVDDYDDDKTTNFSERYSEEEQQEDETERQNKYNIKAYASEEHHGEQPIDYSRKYSTDVPSSAQKPSFPYSNNSSKQKPKKEQVSSNSNTPTPSPNSNRQNQLHPNSAQSRPGLNRPKQIPNKPPSINQETIQTYCVEDTPICFSRGSSLSSLSSAEDEIEGRERNSRGQESNNTLQITEPKEISAVSKDGAVNETRSSVHHTRTKNNRLQTSNISPSDSSRHKSVEFSSGAKSPSKSGAQTPKSPPEHYVQETPLMFSRCTSGSSLDSFESHSIASSIASSVASEHMISGIISPSDLPDSPGQTMPPSRSKTPPPPQTVQAKKDGSKPIVPDEERGKVAKTAVHSAIQRVQVLQEADTLLHFATESTPDGFSCASSLSALSLDEPYIQKDVQLKIMPPVLENDQGNKAEPEKEFIDNKAKKEDKRSEQEKDMLDDTDDDIDILEECIISAMPRKPSRKNKKVPQPTPGKPPPPVARKPSQLPVYKLLSSQNRLQTQKHVNFTHSDDMPRVYCVEGTPINFSTATSLSDLTIESPPSEPTNDQPNTDSLSTDLEKRDTIPTEGRSTDDTDASKPLNPTTVLDEDKAEEGDILAECIHSAMPKGKSHKPYRVKKIMDQINHTSAATSSGNSRSMQETDKNKPTSPVKPMPQSIGFKERLKKNTELKLNPNSENQYCDPRKPSSKKPSKVANEKIPNNEERTKGFAFDSPHHYTPIEGTPYCFSRNDSLSSLDFEDDDIDLSKEKAELRKEKGTKDTDQKVKYKHENRAINPMGKQDQTGPKSLGGRDQPKALVQKPTSFSSAAKGTQDRGGATDEKMENFAIENTPVCFSRNSSLSSLSDIDQENNNKETEPLKQTGTSETQLGLRRPQTSGYAPKSFHVEDTPVCFSRNSSLSSLSIDSEDDLLQECISSAMPKKRKPSKIKNEVGKSRSNSVGGILAEEPDLTLDLRDIQSPDSENAFSPDSENFDWKAIQEGANSIVSRLHQAAAAGSLSRQGSSDSDSILSLKSGISLGSPFHLTLDKEEKTITSNKGPKILKPAEKSALENKKTEEEPKGIKGGKKVYKSLITGKSRSSSDFSSHCKQSVQTNMPSISRGRTMIHIPGVRASSPSTSPVSKKGPVFKNVPSKGSNENPSSSSSPKGTKPLKSELVYGSRPSSTPGGSSKGNSRSGSRDSASSRPSPQPLSRPLQSPGRNSISPGKNGISPPNKFSQLPRTTSPSTASTKSSGSGRMSYTSPGRQLSQPNLSKQSGLPKTHSSIPRSESASKSLNQNVNTGSNKKVELSRMSSTKSSGSESDRSERPALVRQSTFIKEAPSPTLRRKLEESASFESLSSSSRADSPPRSQTQTPALSPSLPDMALSTHSIQAGGWRKMPPNLNPAAEHGDSRRRHDISRSHSESPSRLPITRSGTWKREHSKHSSSLPRVSTWRRTGSSSSILSASSESSEKAKSEDEKQQVCSFPGPRSECSSSAKGTWRKIKESEILETPSNGSSSTIAESNCSLESKTLVYQMAPAVSKTEDVWVRIEDCPINNPRSGRSPTGNSPPVIDNVLDQGQKEEAAKDCHTRHNSGNGNVPLLENRQKSFIKVDGLDTKGTDPKSLINNQQETNENTVAERTAFSSSSSSKHSSPSGTVAARVTPFNYNPSPRKSNGENSTSRPSQIPTPVTNSTKKRDSKTETTDSSGSQSPKRHSGSYLVTSV</sequence>
<keyword id="KW-0175">Coiled coil</keyword>
<keyword id="KW-1185">Reference proteome</keyword>
<keyword id="KW-0677">Repeat</keyword>
<keyword id="KW-0879">Wnt signaling pathway</keyword>
<feature type="chain" id="PRO_0000064630" description="Adenomatous polyposis coli homolog">
    <location>
        <begin position="1"/>
        <end position="2829"/>
    </location>
</feature>
<feature type="repeat" description="ARM 1">
    <location>
        <begin position="343"/>
        <end position="384"/>
    </location>
</feature>
<feature type="repeat" description="ARM 2">
    <location>
        <begin position="462"/>
        <end position="504"/>
    </location>
</feature>
<feature type="repeat" description="ARM 3">
    <location>
        <begin position="516"/>
        <end position="555"/>
    </location>
</feature>
<feature type="repeat" description="ARM 4">
    <location>
        <begin position="559"/>
        <end position="599"/>
    </location>
</feature>
<feature type="repeat" description="ARM 5">
    <location>
        <begin position="603"/>
        <end position="646"/>
    </location>
</feature>
<feature type="repeat" description="ARM 6">
    <location>
        <begin position="652"/>
        <end position="691"/>
    </location>
</feature>
<feature type="repeat" description="ARM 7">
    <location>
        <begin position="694"/>
        <end position="733"/>
    </location>
</feature>
<feature type="region of interest" description="Disordered" evidence="3">
    <location>
        <begin position="80"/>
        <end position="114"/>
    </location>
</feature>
<feature type="region of interest" description="Disordered" evidence="3">
    <location>
        <begin position="240"/>
        <end position="300"/>
    </location>
</feature>
<feature type="region of interest" description="Disordered" evidence="3">
    <location>
        <begin position="833"/>
        <end position="877"/>
    </location>
</feature>
<feature type="region of interest" description="Disordered" evidence="3">
    <location>
        <begin position="901"/>
        <end position="941"/>
    </location>
</feature>
<feature type="region of interest" description="Disordered" evidence="3">
    <location>
        <begin position="963"/>
        <end position="988"/>
    </location>
</feature>
<feature type="region of interest" description="Disordered" evidence="3">
    <location>
        <begin position="1032"/>
        <end position="1260"/>
    </location>
</feature>
<feature type="region of interest" description="Disordered" evidence="3">
    <location>
        <begin position="1278"/>
        <end position="1382"/>
    </location>
</feature>
<feature type="region of interest" description="Disordered" evidence="3">
    <location>
        <begin position="1424"/>
        <end position="1469"/>
    </location>
</feature>
<feature type="region of interest" description="Disordered" evidence="3">
    <location>
        <begin position="1533"/>
        <end position="1612"/>
    </location>
</feature>
<feature type="region of interest" description="Disordered" evidence="3">
    <location>
        <begin position="1657"/>
        <end position="1718"/>
    </location>
</feature>
<feature type="region of interest" description="Disordered" evidence="3">
    <location>
        <begin position="1754"/>
        <end position="1842"/>
    </location>
</feature>
<feature type="region of interest" description="Disordered" evidence="3">
    <location>
        <begin position="1875"/>
        <end position="1950"/>
    </location>
</feature>
<feature type="region of interest" description="Disordered" evidence="3">
    <location>
        <begin position="1963"/>
        <end position="2012"/>
    </location>
</feature>
<feature type="region of interest" description="Disordered" evidence="3">
    <location>
        <begin position="2041"/>
        <end position="2069"/>
    </location>
</feature>
<feature type="region of interest" description="Disordered" evidence="3">
    <location>
        <begin position="2154"/>
        <end position="2627"/>
    </location>
</feature>
<feature type="region of interest" description="Disordered" evidence="3">
    <location>
        <begin position="2686"/>
        <end position="2829"/>
    </location>
</feature>
<feature type="coiled-coil region" evidence="2">
    <location>
        <begin position="4"/>
        <end position="58"/>
    </location>
</feature>
<feature type="coiled-coil region" evidence="2">
    <location>
        <begin position="133"/>
        <end position="244"/>
    </location>
</feature>
<feature type="coiled-coil region" evidence="2">
    <location>
        <begin position="1545"/>
        <end position="1578"/>
    </location>
</feature>
<feature type="compositionally biased region" description="Basic and acidic residues" evidence="3">
    <location>
        <begin position="242"/>
        <end position="262"/>
    </location>
</feature>
<feature type="compositionally biased region" description="Polar residues" evidence="3">
    <location>
        <begin position="291"/>
        <end position="300"/>
    </location>
</feature>
<feature type="compositionally biased region" description="Polar residues" evidence="3">
    <location>
        <begin position="833"/>
        <end position="842"/>
    </location>
</feature>
<feature type="compositionally biased region" description="Basic and acidic residues" evidence="3">
    <location>
        <begin position="848"/>
        <end position="857"/>
    </location>
</feature>
<feature type="compositionally biased region" description="Polar residues" evidence="3">
    <location>
        <begin position="863"/>
        <end position="877"/>
    </location>
</feature>
<feature type="compositionally biased region" description="Polar residues" evidence="3">
    <location>
        <begin position="923"/>
        <end position="941"/>
    </location>
</feature>
<feature type="compositionally biased region" description="Polar residues" evidence="3">
    <location>
        <begin position="1034"/>
        <end position="1047"/>
    </location>
</feature>
<feature type="compositionally biased region" description="Basic and acidic residues" evidence="3">
    <location>
        <begin position="1048"/>
        <end position="1067"/>
    </location>
</feature>
<feature type="compositionally biased region" description="Polar residues" evidence="3">
    <location>
        <begin position="1068"/>
        <end position="1079"/>
    </location>
</feature>
<feature type="compositionally biased region" description="Polar residues" evidence="3">
    <location>
        <begin position="1106"/>
        <end position="1117"/>
    </location>
</feature>
<feature type="compositionally biased region" description="Acidic residues" evidence="3">
    <location>
        <begin position="1150"/>
        <end position="1159"/>
    </location>
</feature>
<feature type="compositionally biased region" description="Basic and acidic residues" evidence="3">
    <location>
        <begin position="1171"/>
        <end position="1188"/>
    </location>
</feature>
<feature type="compositionally biased region" description="Polar residues" evidence="3">
    <location>
        <begin position="1190"/>
        <end position="1208"/>
    </location>
</feature>
<feature type="compositionally biased region" description="Low complexity" evidence="3">
    <location>
        <begin position="1217"/>
        <end position="1230"/>
    </location>
</feature>
<feature type="compositionally biased region" description="Polar residues" evidence="3">
    <location>
        <begin position="1231"/>
        <end position="1244"/>
    </location>
</feature>
<feature type="compositionally biased region" description="Polar residues" evidence="3">
    <location>
        <begin position="1301"/>
        <end position="1310"/>
    </location>
</feature>
<feature type="compositionally biased region" description="Polar residues" evidence="3">
    <location>
        <begin position="1340"/>
        <end position="1351"/>
    </location>
</feature>
<feature type="compositionally biased region" description="Low complexity" evidence="3">
    <location>
        <begin position="1361"/>
        <end position="1372"/>
    </location>
</feature>
<feature type="compositionally biased region" description="Basic and acidic residues" evidence="3">
    <location>
        <begin position="1454"/>
        <end position="1469"/>
    </location>
</feature>
<feature type="compositionally biased region" description="Basic and acidic residues" evidence="3">
    <location>
        <begin position="1537"/>
        <end position="1566"/>
    </location>
</feature>
<feature type="compositionally biased region" description="Acidic residues" evidence="3">
    <location>
        <begin position="1567"/>
        <end position="1577"/>
    </location>
</feature>
<feature type="compositionally biased region" description="Pro residues" evidence="3">
    <location>
        <begin position="1597"/>
        <end position="1608"/>
    </location>
</feature>
<feature type="compositionally biased region" description="Polar residues" evidence="3">
    <location>
        <begin position="1671"/>
        <end position="1683"/>
    </location>
</feature>
<feature type="compositionally biased region" description="Basic and acidic residues" evidence="3">
    <location>
        <begin position="1684"/>
        <end position="1703"/>
    </location>
</feature>
<feature type="compositionally biased region" description="Polar residues" evidence="3">
    <location>
        <begin position="1754"/>
        <end position="1765"/>
    </location>
</feature>
<feature type="compositionally biased region" description="Basic and acidic residues" evidence="3">
    <location>
        <begin position="1786"/>
        <end position="1795"/>
    </location>
</feature>
<feature type="compositionally biased region" description="Basic and acidic residues" evidence="3">
    <location>
        <begin position="1875"/>
        <end position="1898"/>
    </location>
</feature>
<feature type="compositionally biased region" description="Polar residues" evidence="3">
    <location>
        <begin position="1926"/>
        <end position="1935"/>
    </location>
</feature>
<feature type="compositionally biased region" description="Polar residues" evidence="3">
    <location>
        <begin position="1984"/>
        <end position="2003"/>
    </location>
</feature>
<feature type="compositionally biased region" description="Basic and acidic residues" evidence="3">
    <location>
        <begin position="2168"/>
        <end position="2186"/>
    </location>
</feature>
<feature type="compositionally biased region" description="Polar residues" evidence="3">
    <location>
        <begin position="2199"/>
        <end position="2222"/>
    </location>
</feature>
<feature type="compositionally biased region" description="Low complexity" evidence="3">
    <location>
        <begin position="2256"/>
        <end position="2275"/>
    </location>
</feature>
<feature type="compositionally biased region" description="Low complexity" evidence="3">
    <location>
        <begin position="2283"/>
        <end position="2322"/>
    </location>
</feature>
<feature type="compositionally biased region" description="Low complexity" evidence="3">
    <location>
        <begin position="2346"/>
        <end position="2359"/>
    </location>
</feature>
<feature type="compositionally biased region" description="Polar residues" evidence="3">
    <location>
        <begin position="2360"/>
        <end position="2408"/>
    </location>
</feature>
<feature type="compositionally biased region" description="Polar residues" evidence="3">
    <location>
        <begin position="2415"/>
        <end position="2424"/>
    </location>
</feature>
<feature type="compositionally biased region" description="Low complexity" evidence="3">
    <location>
        <begin position="2456"/>
        <end position="2474"/>
    </location>
</feature>
<feature type="compositionally biased region" description="Polar residues" evidence="3">
    <location>
        <begin position="2549"/>
        <end position="2562"/>
    </location>
</feature>
<feature type="compositionally biased region" description="Low complexity" evidence="3">
    <location>
        <begin position="2563"/>
        <end position="2573"/>
    </location>
</feature>
<feature type="compositionally biased region" description="Basic and acidic residues" evidence="3">
    <location>
        <begin position="2574"/>
        <end position="2585"/>
    </location>
</feature>
<feature type="compositionally biased region" description="Polar residues" evidence="3">
    <location>
        <begin position="2616"/>
        <end position="2627"/>
    </location>
</feature>
<feature type="compositionally biased region" description="Basic and acidic residues" evidence="3">
    <location>
        <begin position="2686"/>
        <end position="2695"/>
    </location>
</feature>
<feature type="compositionally biased region" description="Polar residues" evidence="3">
    <location>
        <begin position="2730"/>
        <end position="2743"/>
    </location>
</feature>
<feature type="compositionally biased region" description="Low complexity" evidence="3">
    <location>
        <begin position="2749"/>
        <end position="2760"/>
    </location>
</feature>
<feature type="compositionally biased region" description="Polar residues" evidence="3">
    <location>
        <begin position="2770"/>
        <end position="2798"/>
    </location>
</feature>
<dbReference type="EMBL" id="U64442">
    <property type="protein sequence ID" value="AAB41671.1"/>
    <property type="molecule type" value="mRNA"/>
</dbReference>
<dbReference type="RefSeq" id="NP_001084351.1">
    <property type="nucleotide sequence ID" value="NM_001090882.1"/>
</dbReference>
<dbReference type="SMR" id="P70039"/>
<dbReference type="BioGRID" id="100780">
    <property type="interactions" value="5"/>
</dbReference>
<dbReference type="IntAct" id="P70039">
    <property type="interactions" value="10"/>
</dbReference>
<dbReference type="MINT" id="P70039"/>
<dbReference type="GeneID" id="399455"/>
<dbReference type="KEGG" id="xla:399455"/>
<dbReference type="AGR" id="Xenbase:XB-GENE-480859"/>
<dbReference type="CTD" id="399455"/>
<dbReference type="Xenbase" id="XB-GENE-480859">
    <property type="gene designation" value="apc.L"/>
</dbReference>
<dbReference type="OrthoDB" id="5918429at2759"/>
<dbReference type="PRO" id="PR:P70039"/>
<dbReference type="Proteomes" id="UP000186698">
    <property type="component" value="Chromosome 1L"/>
</dbReference>
<dbReference type="Bgee" id="399455">
    <property type="expression patterns" value="Expressed in egg cell and 19 other cell types or tissues"/>
</dbReference>
<dbReference type="GO" id="GO:0030877">
    <property type="term" value="C:beta-catenin destruction complex"/>
    <property type="evidence" value="ECO:0000250"/>
    <property type="project" value="UniProtKB"/>
</dbReference>
<dbReference type="GO" id="GO:0016342">
    <property type="term" value="C:catenin complex"/>
    <property type="evidence" value="ECO:0000318"/>
    <property type="project" value="GO_Central"/>
</dbReference>
<dbReference type="GO" id="GO:0005813">
    <property type="term" value="C:centrosome"/>
    <property type="evidence" value="ECO:0000250"/>
    <property type="project" value="UniProtKB"/>
</dbReference>
<dbReference type="GO" id="GO:0005737">
    <property type="term" value="C:cytoplasm"/>
    <property type="evidence" value="ECO:0000250"/>
    <property type="project" value="UniProtKB"/>
</dbReference>
<dbReference type="GO" id="GO:0005881">
    <property type="term" value="C:cytoplasmic microtubule"/>
    <property type="evidence" value="ECO:0007669"/>
    <property type="project" value="TreeGrafter"/>
</dbReference>
<dbReference type="GO" id="GO:0000776">
    <property type="term" value="C:kinetochore"/>
    <property type="evidence" value="ECO:0000250"/>
    <property type="project" value="UniProtKB"/>
</dbReference>
<dbReference type="GO" id="GO:0005634">
    <property type="term" value="C:nucleus"/>
    <property type="evidence" value="ECO:0000250"/>
    <property type="project" value="UniProtKB"/>
</dbReference>
<dbReference type="GO" id="GO:0008013">
    <property type="term" value="F:beta-catenin binding"/>
    <property type="evidence" value="ECO:0000250"/>
    <property type="project" value="UniProtKB"/>
</dbReference>
<dbReference type="GO" id="GO:0045295">
    <property type="term" value="F:gamma-catenin binding"/>
    <property type="evidence" value="ECO:0000318"/>
    <property type="project" value="GO_Central"/>
</dbReference>
<dbReference type="GO" id="GO:0008017">
    <property type="term" value="F:microtubule binding"/>
    <property type="evidence" value="ECO:0000250"/>
    <property type="project" value="UniProtKB"/>
</dbReference>
<dbReference type="GO" id="GO:0019887">
    <property type="term" value="F:protein kinase regulator activity"/>
    <property type="evidence" value="ECO:0000250"/>
    <property type="project" value="UniProtKB"/>
</dbReference>
<dbReference type="GO" id="GO:0001708">
    <property type="term" value="P:cell fate specification"/>
    <property type="evidence" value="ECO:0000318"/>
    <property type="project" value="GO_Central"/>
</dbReference>
<dbReference type="GO" id="GO:0016477">
    <property type="term" value="P:cell migration"/>
    <property type="evidence" value="ECO:0000318"/>
    <property type="project" value="GO_Central"/>
</dbReference>
<dbReference type="GO" id="GO:0006974">
    <property type="term" value="P:DNA damage response"/>
    <property type="evidence" value="ECO:0000250"/>
    <property type="project" value="UniProtKB"/>
</dbReference>
<dbReference type="GO" id="GO:0090090">
    <property type="term" value="P:negative regulation of canonical Wnt signaling pathway"/>
    <property type="evidence" value="ECO:0000318"/>
    <property type="project" value="GO_Central"/>
</dbReference>
<dbReference type="GO" id="GO:1902807">
    <property type="term" value="P:negative regulation of cell cycle G1/S phase transition"/>
    <property type="evidence" value="ECO:0000250"/>
    <property type="project" value="UniProtKB"/>
</dbReference>
<dbReference type="GO" id="GO:0008285">
    <property type="term" value="P:negative regulation of cell population proliferation"/>
    <property type="evidence" value="ECO:0000250"/>
    <property type="project" value="UniProtKB"/>
</dbReference>
<dbReference type="GO" id="GO:0045736">
    <property type="term" value="P:negative regulation of cyclin-dependent protein serine/threonine kinase activity"/>
    <property type="evidence" value="ECO:0000250"/>
    <property type="project" value="UniProtKB"/>
</dbReference>
<dbReference type="GO" id="GO:0007026">
    <property type="term" value="P:negative regulation of microtubule depolymerization"/>
    <property type="evidence" value="ECO:0000250"/>
    <property type="project" value="UniProtKB"/>
</dbReference>
<dbReference type="GO" id="GO:0007399">
    <property type="term" value="P:nervous system development"/>
    <property type="evidence" value="ECO:0000318"/>
    <property type="project" value="GO_Central"/>
</dbReference>
<dbReference type="GO" id="GO:0007389">
    <property type="term" value="P:pattern specification process"/>
    <property type="evidence" value="ECO:0000318"/>
    <property type="project" value="GO_Central"/>
</dbReference>
<dbReference type="GO" id="GO:0065003">
    <property type="term" value="P:protein-containing complex assembly"/>
    <property type="evidence" value="ECO:0000250"/>
    <property type="project" value="UniProtKB"/>
</dbReference>
<dbReference type="GO" id="GO:0016055">
    <property type="term" value="P:Wnt signaling pathway"/>
    <property type="evidence" value="ECO:0007669"/>
    <property type="project" value="UniProtKB-KW"/>
</dbReference>
<dbReference type="FunFam" id="1.25.10.10:FF:000035">
    <property type="entry name" value="adenomatous polyposis coli protein 2"/>
    <property type="match status" value="1"/>
</dbReference>
<dbReference type="FunFam" id="1.10.287.450:FF:000001">
    <property type="entry name" value="adenomatous polyposis coli protein isoform X1"/>
    <property type="match status" value="1"/>
</dbReference>
<dbReference type="Gene3D" id="1.20.5.10">
    <property type="match status" value="1"/>
</dbReference>
<dbReference type="Gene3D" id="1.10.287.450">
    <property type="entry name" value="Helix hairpin bin"/>
    <property type="match status" value="1"/>
</dbReference>
<dbReference type="Gene3D" id="1.25.10.10">
    <property type="entry name" value="Leucine-rich Repeat Variant"/>
    <property type="match status" value="1"/>
</dbReference>
<dbReference type="InterPro" id="IPR009240">
    <property type="entry name" value="APC_15aa_rpt"/>
</dbReference>
<dbReference type="InterPro" id="IPR009234">
    <property type="entry name" value="APC_basic_dom"/>
</dbReference>
<dbReference type="InterPro" id="IPR026831">
    <property type="entry name" value="APC_dom"/>
</dbReference>
<dbReference type="InterPro" id="IPR026818">
    <property type="entry name" value="Apc_fam"/>
</dbReference>
<dbReference type="InterPro" id="IPR032038">
    <property type="entry name" value="APC_N"/>
</dbReference>
<dbReference type="InterPro" id="IPR036149">
    <property type="entry name" value="APC_N_sf"/>
</dbReference>
<dbReference type="InterPro" id="IPR041257">
    <property type="entry name" value="APC_rep"/>
</dbReference>
<dbReference type="InterPro" id="IPR009223">
    <property type="entry name" value="APC_rpt"/>
</dbReference>
<dbReference type="InterPro" id="IPR011989">
    <property type="entry name" value="ARM-like"/>
</dbReference>
<dbReference type="InterPro" id="IPR016024">
    <property type="entry name" value="ARM-type_fold"/>
</dbReference>
<dbReference type="InterPro" id="IPR000225">
    <property type="entry name" value="Armadillo"/>
</dbReference>
<dbReference type="InterPro" id="IPR009232">
    <property type="entry name" value="EB1-bd"/>
</dbReference>
<dbReference type="InterPro" id="IPR009224">
    <property type="entry name" value="SAMP"/>
</dbReference>
<dbReference type="PANTHER" id="PTHR12607:SF11">
    <property type="entry name" value="ADENOMATOUS POLYPOSIS COLI PROTEIN"/>
    <property type="match status" value="1"/>
</dbReference>
<dbReference type="PANTHER" id="PTHR12607">
    <property type="entry name" value="ADENOMATOUS POLYPOSIS COLI PROTEIN FAMILY"/>
    <property type="match status" value="1"/>
</dbReference>
<dbReference type="Pfam" id="PF05972">
    <property type="entry name" value="APC_15aa"/>
    <property type="match status" value="2"/>
</dbReference>
<dbReference type="Pfam" id="PF05956">
    <property type="entry name" value="APC_basic"/>
    <property type="match status" value="1"/>
</dbReference>
<dbReference type="Pfam" id="PF16689">
    <property type="entry name" value="APC_N_CC"/>
    <property type="match status" value="1"/>
</dbReference>
<dbReference type="Pfam" id="PF05923">
    <property type="entry name" value="APC_r"/>
    <property type="match status" value="7"/>
</dbReference>
<dbReference type="Pfam" id="PF18797">
    <property type="entry name" value="APC_rep"/>
    <property type="match status" value="1"/>
</dbReference>
<dbReference type="Pfam" id="PF16634">
    <property type="entry name" value="APC_u13"/>
    <property type="match status" value="1"/>
</dbReference>
<dbReference type="Pfam" id="PF16635">
    <property type="entry name" value="APC_u14"/>
    <property type="match status" value="1"/>
</dbReference>
<dbReference type="Pfam" id="PF16636">
    <property type="entry name" value="APC_u15"/>
    <property type="match status" value="1"/>
</dbReference>
<dbReference type="Pfam" id="PF16630">
    <property type="entry name" value="APC_u5"/>
    <property type="match status" value="1"/>
</dbReference>
<dbReference type="Pfam" id="PF16633">
    <property type="entry name" value="APC_u9"/>
    <property type="match status" value="1"/>
</dbReference>
<dbReference type="Pfam" id="PF00514">
    <property type="entry name" value="Arm"/>
    <property type="match status" value="1"/>
</dbReference>
<dbReference type="Pfam" id="PF16629">
    <property type="entry name" value="Arm_APC_u3"/>
    <property type="match status" value="1"/>
</dbReference>
<dbReference type="Pfam" id="PF05937">
    <property type="entry name" value="EB1_binding"/>
    <property type="match status" value="1"/>
</dbReference>
<dbReference type="Pfam" id="PF05924">
    <property type="entry name" value="SAMP"/>
    <property type="match status" value="3"/>
</dbReference>
<dbReference type="Pfam" id="PF11414">
    <property type="entry name" value="Suppressor_APC"/>
    <property type="match status" value="1"/>
</dbReference>
<dbReference type="SMART" id="SM00185">
    <property type="entry name" value="ARM"/>
    <property type="match status" value="6"/>
</dbReference>
<dbReference type="SUPFAM" id="SSF48371">
    <property type="entry name" value="ARM repeat"/>
    <property type="match status" value="1"/>
</dbReference>
<dbReference type="SUPFAM" id="SSF58050">
    <property type="entry name" value="N-terminal coiled coil domain from apc"/>
    <property type="match status" value="1"/>
</dbReference>
<dbReference type="SUPFAM" id="SSF82931">
    <property type="entry name" value="Tumor suppressor gene product Apc"/>
    <property type="match status" value="1"/>
</dbReference>